<protein>
    <recommendedName>
        <fullName evidence="1">Ribonuclease Y 1</fullName>
        <shortName evidence="1">RNase Y 1</shortName>
        <ecNumber evidence="1">3.1.-.-</ecNumber>
    </recommendedName>
</protein>
<name>RNY1_LEVBA</name>
<accession>Q03R31</accession>
<reference key="1">
    <citation type="journal article" date="2006" name="Proc. Natl. Acad. Sci. U.S.A.">
        <title>Comparative genomics of the lactic acid bacteria.</title>
        <authorList>
            <person name="Makarova K.S."/>
            <person name="Slesarev A."/>
            <person name="Wolf Y.I."/>
            <person name="Sorokin A."/>
            <person name="Mirkin B."/>
            <person name="Koonin E.V."/>
            <person name="Pavlov A."/>
            <person name="Pavlova N."/>
            <person name="Karamychev V."/>
            <person name="Polouchine N."/>
            <person name="Shakhova V."/>
            <person name="Grigoriev I."/>
            <person name="Lou Y."/>
            <person name="Rohksar D."/>
            <person name="Lucas S."/>
            <person name="Huang K."/>
            <person name="Goodstein D.M."/>
            <person name="Hawkins T."/>
            <person name="Plengvidhya V."/>
            <person name="Welker D."/>
            <person name="Hughes J."/>
            <person name="Goh Y."/>
            <person name="Benson A."/>
            <person name="Baldwin K."/>
            <person name="Lee J.-H."/>
            <person name="Diaz-Muniz I."/>
            <person name="Dosti B."/>
            <person name="Smeianov V."/>
            <person name="Wechter W."/>
            <person name="Barabote R."/>
            <person name="Lorca G."/>
            <person name="Altermann E."/>
            <person name="Barrangou R."/>
            <person name="Ganesan B."/>
            <person name="Xie Y."/>
            <person name="Rawsthorne H."/>
            <person name="Tamir D."/>
            <person name="Parker C."/>
            <person name="Breidt F."/>
            <person name="Broadbent J.R."/>
            <person name="Hutkins R."/>
            <person name="O'Sullivan D."/>
            <person name="Steele J."/>
            <person name="Unlu G."/>
            <person name="Saier M.H. Jr."/>
            <person name="Klaenhammer T."/>
            <person name="Richardson P."/>
            <person name="Kozyavkin S."/>
            <person name="Weimer B.C."/>
            <person name="Mills D.A."/>
        </authorList>
    </citation>
    <scope>NUCLEOTIDE SEQUENCE [LARGE SCALE GENOMIC DNA]</scope>
    <source>
        <strain>ATCC 367 / BCRC 12310 / CIP 105137 / JCM 1170 / LMG 11437 / NCIMB 947 / NCTC 947</strain>
    </source>
</reference>
<sequence length="519" mass="57405">MSVPIVILAIIAIVVGVVGGYYLRKSVHERKLDAAKYTAAGVLAEAKKQAETATKEALLEAKEDSHKYRAEVETELKERRAEVQKQEDRLIQREETLDRKDNSLEKRENSLNRRDKKLSAEEQNLVKKQQQADSLIEKRQAAVEAVAALSQDDARELIISEAKTALASERAKMIKESEETARKTAQANAKDLIVSAIQRSAADMVTETTITVVTLPNDDMKGRIIGREGRNIRTLETLTGIDLIIDDTPEAVVLSGFDPLRREVAKIALEKLIQDGRIHPARIEEMVAKAKKELDEHVRELGEQATFDLGIHSMHPELVKLVGRLNFRISHGQNALAHSIEVAKITGVLAAELGEDVTLAKRAGLLHDIGRAAEHEDDNSYITTGMELTKKYRESSVVVNAIAAQAEETAAQSVIAELVSTADIISATRPGARSDSLESYIHRLDKLETIANEFDGVDHSFAIQAGREVRVIVRPDRISDTDAVVLARDIKQQIEGDLDYPGHVKVSVIREVRSVEYAK</sequence>
<proteinExistence type="inferred from homology"/>
<comment type="function">
    <text evidence="1">Endoribonuclease that initiates mRNA decay.</text>
</comment>
<comment type="subcellular location">
    <subcellularLocation>
        <location evidence="1">Cell membrane</location>
        <topology evidence="1">Single-pass membrane protein</topology>
    </subcellularLocation>
</comment>
<comment type="similarity">
    <text evidence="1">Belongs to the RNase Y family.</text>
</comment>
<gene>
    <name evidence="1" type="primary">rny1</name>
    <name type="ordered locus">LVIS_1235</name>
</gene>
<dbReference type="EC" id="3.1.-.-" evidence="1"/>
<dbReference type="EMBL" id="CP000416">
    <property type="protein sequence ID" value="ABJ64341.1"/>
    <property type="molecule type" value="Genomic_DNA"/>
</dbReference>
<dbReference type="SMR" id="Q03R31"/>
<dbReference type="STRING" id="387344.LVIS_1235"/>
<dbReference type="KEGG" id="lbr:LVIS_1235"/>
<dbReference type="eggNOG" id="COG1418">
    <property type="taxonomic scope" value="Bacteria"/>
</dbReference>
<dbReference type="HOGENOM" id="CLU_028328_1_0_9"/>
<dbReference type="Proteomes" id="UP000001652">
    <property type="component" value="Chromosome"/>
</dbReference>
<dbReference type="GO" id="GO:0005886">
    <property type="term" value="C:plasma membrane"/>
    <property type="evidence" value="ECO:0007669"/>
    <property type="project" value="UniProtKB-SubCell"/>
</dbReference>
<dbReference type="GO" id="GO:0003723">
    <property type="term" value="F:RNA binding"/>
    <property type="evidence" value="ECO:0007669"/>
    <property type="project" value="UniProtKB-UniRule"/>
</dbReference>
<dbReference type="GO" id="GO:0004521">
    <property type="term" value="F:RNA endonuclease activity"/>
    <property type="evidence" value="ECO:0007669"/>
    <property type="project" value="UniProtKB-UniRule"/>
</dbReference>
<dbReference type="GO" id="GO:0006402">
    <property type="term" value="P:mRNA catabolic process"/>
    <property type="evidence" value="ECO:0007669"/>
    <property type="project" value="UniProtKB-UniRule"/>
</dbReference>
<dbReference type="CDD" id="cd00077">
    <property type="entry name" value="HDc"/>
    <property type="match status" value="1"/>
</dbReference>
<dbReference type="CDD" id="cd22431">
    <property type="entry name" value="KH-I_RNaseY"/>
    <property type="match status" value="1"/>
</dbReference>
<dbReference type="FunFam" id="3.30.1370.10:FF:000006">
    <property type="entry name" value="Ribonuclease Y"/>
    <property type="match status" value="1"/>
</dbReference>
<dbReference type="Gene3D" id="3.30.300.20">
    <property type="match status" value="1"/>
</dbReference>
<dbReference type="Gene3D" id="1.10.3210.10">
    <property type="entry name" value="Hypothetical protein af1432"/>
    <property type="match status" value="1"/>
</dbReference>
<dbReference type="HAMAP" id="MF_00335">
    <property type="entry name" value="RNase_Y"/>
    <property type="match status" value="1"/>
</dbReference>
<dbReference type="InterPro" id="IPR003607">
    <property type="entry name" value="HD/PDEase_dom"/>
</dbReference>
<dbReference type="InterPro" id="IPR006674">
    <property type="entry name" value="HD_domain"/>
</dbReference>
<dbReference type="InterPro" id="IPR006675">
    <property type="entry name" value="HDIG_dom"/>
</dbReference>
<dbReference type="InterPro" id="IPR004087">
    <property type="entry name" value="KH_dom"/>
</dbReference>
<dbReference type="InterPro" id="IPR015946">
    <property type="entry name" value="KH_dom-like_a/b"/>
</dbReference>
<dbReference type="InterPro" id="IPR004088">
    <property type="entry name" value="KH_dom_type_1"/>
</dbReference>
<dbReference type="InterPro" id="IPR036612">
    <property type="entry name" value="KH_dom_type_1_sf"/>
</dbReference>
<dbReference type="InterPro" id="IPR017705">
    <property type="entry name" value="Ribonuclease_Y"/>
</dbReference>
<dbReference type="InterPro" id="IPR022711">
    <property type="entry name" value="RNase_Y_N"/>
</dbReference>
<dbReference type="NCBIfam" id="TIGR00277">
    <property type="entry name" value="HDIG"/>
    <property type="match status" value="1"/>
</dbReference>
<dbReference type="NCBIfam" id="TIGR03319">
    <property type="entry name" value="RNase_Y"/>
    <property type="match status" value="1"/>
</dbReference>
<dbReference type="PANTHER" id="PTHR12826">
    <property type="entry name" value="RIBONUCLEASE Y"/>
    <property type="match status" value="1"/>
</dbReference>
<dbReference type="PANTHER" id="PTHR12826:SF15">
    <property type="entry name" value="RIBONUCLEASE Y"/>
    <property type="match status" value="1"/>
</dbReference>
<dbReference type="Pfam" id="PF01966">
    <property type="entry name" value="HD"/>
    <property type="match status" value="1"/>
</dbReference>
<dbReference type="Pfam" id="PF00013">
    <property type="entry name" value="KH_1"/>
    <property type="match status" value="1"/>
</dbReference>
<dbReference type="Pfam" id="PF12072">
    <property type="entry name" value="RNase_Y_N"/>
    <property type="match status" value="1"/>
</dbReference>
<dbReference type="SMART" id="SM00471">
    <property type="entry name" value="HDc"/>
    <property type="match status" value="1"/>
</dbReference>
<dbReference type="SMART" id="SM00322">
    <property type="entry name" value="KH"/>
    <property type="match status" value="1"/>
</dbReference>
<dbReference type="SUPFAM" id="SSF54791">
    <property type="entry name" value="Eukaryotic type KH-domain (KH-domain type I)"/>
    <property type="match status" value="1"/>
</dbReference>
<dbReference type="SUPFAM" id="SSF109604">
    <property type="entry name" value="HD-domain/PDEase-like"/>
    <property type="match status" value="1"/>
</dbReference>
<dbReference type="PROSITE" id="PS51831">
    <property type="entry name" value="HD"/>
    <property type="match status" value="1"/>
</dbReference>
<dbReference type="PROSITE" id="PS50084">
    <property type="entry name" value="KH_TYPE_1"/>
    <property type="match status" value="1"/>
</dbReference>
<organism>
    <name type="scientific">Levilactobacillus brevis (strain ATCC 367 / BCRC 12310 / CIP 105137 / JCM 1170 / LMG 11437 / NCIMB 947 / NCTC 947)</name>
    <name type="common">Lactobacillus brevis</name>
    <dbReference type="NCBI Taxonomy" id="387344"/>
    <lineage>
        <taxon>Bacteria</taxon>
        <taxon>Bacillati</taxon>
        <taxon>Bacillota</taxon>
        <taxon>Bacilli</taxon>
        <taxon>Lactobacillales</taxon>
        <taxon>Lactobacillaceae</taxon>
        <taxon>Levilactobacillus</taxon>
    </lineage>
</organism>
<feature type="chain" id="PRO_0000344889" description="Ribonuclease Y 1">
    <location>
        <begin position="1"/>
        <end position="519"/>
    </location>
</feature>
<feature type="transmembrane region" description="Helical" evidence="1">
    <location>
        <begin position="3"/>
        <end position="23"/>
    </location>
</feature>
<feature type="domain" description="KH" evidence="1">
    <location>
        <begin position="209"/>
        <end position="272"/>
    </location>
</feature>
<feature type="domain" description="HD" evidence="2">
    <location>
        <begin position="335"/>
        <end position="428"/>
    </location>
</feature>
<feature type="region of interest" description="Disordered" evidence="3">
    <location>
        <begin position="92"/>
        <end position="124"/>
    </location>
</feature>
<feature type="compositionally biased region" description="Basic and acidic residues" evidence="3">
    <location>
        <begin position="92"/>
        <end position="120"/>
    </location>
</feature>
<keyword id="KW-1003">Cell membrane</keyword>
<keyword id="KW-0255">Endonuclease</keyword>
<keyword id="KW-0378">Hydrolase</keyword>
<keyword id="KW-0472">Membrane</keyword>
<keyword id="KW-0540">Nuclease</keyword>
<keyword id="KW-1185">Reference proteome</keyword>
<keyword id="KW-0694">RNA-binding</keyword>
<keyword id="KW-0812">Transmembrane</keyword>
<keyword id="KW-1133">Transmembrane helix</keyword>
<evidence type="ECO:0000255" key="1">
    <source>
        <dbReference type="HAMAP-Rule" id="MF_00335"/>
    </source>
</evidence>
<evidence type="ECO:0000255" key="2">
    <source>
        <dbReference type="PROSITE-ProRule" id="PRU01175"/>
    </source>
</evidence>
<evidence type="ECO:0000256" key="3">
    <source>
        <dbReference type="SAM" id="MobiDB-lite"/>
    </source>
</evidence>